<gene>
    <name evidence="1" type="primary">cmk</name>
    <name type="ordered locus">Fjoh_2756</name>
</gene>
<protein>
    <recommendedName>
        <fullName evidence="1">Cytidylate kinase</fullName>
        <shortName evidence="1">CK</shortName>
        <ecNumber evidence="1">2.7.4.25</ecNumber>
    </recommendedName>
    <alternativeName>
        <fullName evidence="1">Cytidine monophosphate kinase</fullName>
        <shortName evidence="1">CMP kinase</shortName>
    </alternativeName>
</protein>
<organism>
    <name type="scientific">Flavobacterium johnsoniae (strain ATCC 17061 / DSM 2064 / JCM 8514 / BCRC 14874 / CCUG 350202 / NBRC 14942 / NCIMB 11054 / UW101)</name>
    <name type="common">Cytophaga johnsonae</name>
    <dbReference type="NCBI Taxonomy" id="376686"/>
    <lineage>
        <taxon>Bacteria</taxon>
        <taxon>Pseudomonadati</taxon>
        <taxon>Bacteroidota</taxon>
        <taxon>Flavobacteriia</taxon>
        <taxon>Flavobacteriales</taxon>
        <taxon>Flavobacteriaceae</taxon>
        <taxon>Flavobacterium</taxon>
    </lineage>
</organism>
<accession>A5FG91</accession>
<comment type="catalytic activity">
    <reaction evidence="1">
        <text>CMP + ATP = CDP + ADP</text>
        <dbReference type="Rhea" id="RHEA:11600"/>
        <dbReference type="ChEBI" id="CHEBI:30616"/>
        <dbReference type="ChEBI" id="CHEBI:58069"/>
        <dbReference type="ChEBI" id="CHEBI:60377"/>
        <dbReference type="ChEBI" id="CHEBI:456216"/>
        <dbReference type="EC" id="2.7.4.25"/>
    </reaction>
</comment>
<comment type="catalytic activity">
    <reaction evidence="1">
        <text>dCMP + ATP = dCDP + ADP</text>
        <dbReference type="Rhea" id="RHEA:25094"/>
        <dbReference type="ChEBI" id="CHEBI:30616"/>
        <dbReference type="ChEBI" id="CHEBI:57566"/>
        <dbReference type="ChEBI" id="CHEBI:58593"/>
        <dbReference type="ChEBI" id="CHEBI:456216"/>
        <dbReference type="EC" id="2.7.4.25"/>
    </reaction>
</comment>
<comment type="subcellular location">
    <subcellularLocation>
        <location evidence="1">Cytoplasm</location>
    </subcellularLocation>
</comment>
<comment type="similarity">
    <text evidence="1">Belongs to the cytidylate kinase family. Type 1 subfamily.</text>
</comment>
<reference key="1">
    <citation type="journal article" date="2009" name="Appl. Environ. Microbiol.">
        <title>Novel features of the polysaccharide-digesting gliding bacterium Flavobacterium johnsoniae as revealed by genome sequence analysis.</title>
        <authorList>
            <person name="McBride M.J."/>
            <person name="Xie G."/>
            <person name="Martens E.C."/>
            <person name="Lapidus A."/>
            <person name="Henrissat B."/>
            <person name="Rhodes R.G."/>
            <person name="Goltsman E."/>
            <person name="Wang W."/>
            <person name="Xu J."/>
            <person name="Hunnicutt D.W."/>
            <person name="Staroscik A.M."/>
            <person name="Hoover T.R."/>
            <person name="Cheng Y.Q."/>
            <person name="Stein J.L."/>
        </authorList>
    </citation>
    <scope>NUCLEOTIDE SEQUENCE [LARGE SCALE GENOMIC DNA]</scope>
    <source>
        <strain>ATCC 17061 / DSM 2064 / JCM 8514 / BCRC 14874 / CCUG 350202 / NBRC 14942 / NCIMB 11054 / UW101</strain>
    </source>
</reference>
<sequence>MKKITIAIDGFSSTGKSTLAKQLAKELEYVYVDTGAMYRAVAYFAMQNKFIGADFFNKEALIEALPKIQLEFKFNSDLGFAEMYLNGENVEKQIRTIEVSNFVSKVAEVSEVRSKLVEQQQEMGTNKAIVMDGRDIGTVVFPNAELKIFMTASAETRAQRRFDELQQKGDNVSYEDVLKNVVERDYIDTHREDSPLVIADDAIEIDNSYLNKEEQFAAVLELVNDVVKID</sequence>
<evidence type="ECO:0000255" key="1">
    <source>
        <dbReference type="HAMAP-Rule" id="MF_00238"/>
    </source>
</evidence>
<dbReference type="EC" id="2.7.4.25" evidence="1"/>
<dbReference type="EMBL" id="CP000685">
    <property type="protein sequence ID" value="ABQ05778.1"/>
    <property type="molecule type" value="Genomic_DNA"/>
</dbReference>
<dbReference type="RefSeq" id="WP_012024817.1">
    <property type="nucleotide sequence ID" value="NC_009441.1"/>
</dbReference>
<dbReference type="SMR" id="A5FG91"/>
<dbReference type="STRING" id="376686.Fjoh_2756"/>
<dbReference type="KEGG" id="fjo:Fjoh_2756"/>
<dbReference type="eggNOG" id="COG0283">
    <property type="taxonomic scope" value="Bacteria"/>
</dbReference>
<dbReference type="HOGENOM" id="CLU_079959_0_2_10"/>
<dbReference type="OrthoDB" id="9807434at2"/>
<dbReference type="Proteomes" id="UP000006694">
    <property type="component" value="Chromosome"/>
</dbReference>
<dbReference type="GO" id="GO:0005829">
    <property type="term" value="C:cytosol"/>
    <property type="evidence" value="ECO:0007669"/>
    <property type="project" value="TreeGrafter"/>
</dbReference>
<dbReference type="GO" id="GO:0005524">
    <property type="term" value="F:ATP binding"/>
    <property type="evidence" value="ECO:0007669"/>
    <property type="project" value="UniProtKB-UniRule"/>
</dbReference>
<dbReference type="GO" id="GO:0036430">
    <property type="term" value="F:CMP kinase activity"/>
    <property type="evidence" value="ECO:0007669"/>
    <property type="project" value="RHEA"/>
</dbReference>
<dbReference type="GO" id="GO:0036431">
    <property type="term" value="F:dCMP kinase activity"/>
    <property type="evidence" value="ECO:0007669"/>
    <property type="project" value="RHEA"/>
</dbReference>
<dbReference type="GO" id="GO:0015949">
    <property type="term" value="P:nucleobase-containing small molecule interconversion"/>
    <property type="evidence" value="ECO:0007669"/>
    <property type="project" value="TreeGrafter"/>
</dbReference>
<dbReference type="GO" id="GO:0006220">
    <property type="term" value="P:pyrimidine nucleotide metabolic process"/>
    <property type="evidence" value="ECO:0007669"/>
    <property type="project" value="UniProtKB-UniRule"/>
</dbReference>
<dbReference type="CDD" id="cd02020">
    <property type="entry name" value="CMPK"/>
    <property type="match status" value="1"/>
</dbReference>
<dbReference type="Gene3D" id="3.40.50.300">
    <property type="entry name" value="P-loop containing nucleotide triphosphate hydrolases"/>
    <property type="match status" value="1"/>
</dbReference>
<dbReference type="HAMAP" id="MF_00238">
    <property type="entry name" value="Cytidyl_kinase_type1"/>
    <property type="match status" value="1"/>
</dbReference>
<dbReference type="InterPro" id="IPR003136">
    <property type="entry name" value="Cytidylate_kin"/>
</dbReference>
<dbReference type="InterPro" id="IPR011994">
    <property type="entry name" value="Cytidylate_kinase_dom"/>
</dbReference>
<dbReference type="InterPro" id="IPR027417">
    <property type="entry name" value="P-loop_NTPase"/>
</dbReference>
<dbReference type="NCBIfam" id="TIGR00017">
    <property type="entry name" value="cmk"/>
    <property type="match status" value="1"/>
</dbReference>
<dbReference type="PANTHER" id="PTHR21299:SF2">
    <property type="entry name" value="CYTIDYLATE KINASE"/>
    <property type="match status" value="1"/>
</dbReference>
<dbReference type="PANTHER" id="PTHR21299">
    <property type="entry name" value="CYTIDYLATE KINASE/PANTOATE-BETA-ALANINE LIGASE"/>
    <property type="match status" value="1"/>
</dbReference>
<dbReference type="Pfam" id="PF02224">
    <property type="entry name" value="Cytidylate_kin"/>
    <property type="match status" value="1"/>
</dbReference>
<dbReference type="SUPFAM" id="SSF52540">
    <property type="entry name" value="P-loop containing nucleoside triphosphate hydrolases"/>
    <property type="match status" value="1"/>
</dbReference>
<proteinExistence type="inferred from homology"/>
<feature type="chain" id="PRO_1000078339" description="Cytidylate kinase">
    <location>
        <begin position="1"/>
        <end position="230"/>
    </location>
</feature>
<feature type="binding site" evidence="1">
    <location>
        <begin position="10"/>
        <end position="18"/>
    </location>
    <ligand>
        <name>ATP</name>
        <dbReference type="ChEBI" id="CHEBI:30616"/>
    </ligand>
</feature>
<keyword id="KW-0067">ATP-binding</keyword>
<keyword id="KW-0963">Cytoplasm</keyword>
<keyword id="KW-0418">Kinase</keyword>
<keyword id="KW-0547">Nucleotide-binding</keyword>
<keyword id="KW-0808">Transferase</keyword>
<name>KCY_FLAJ1</name>